<organism>
    <name type="scientific">Escherichia coli O157:H7</name>
    <dbReference type="NCBI Taxonomy" id="83334"/>
    <lineage>
        <taxon>Bacteria</taxon>
        <taxon>Pseudomonadati</taxon>
        <taxon>Pseudomonadota</taxon>
        <taxon>Gammaproteobacteria</taxon>
        <taxon>Enterobacterales</taxon>
        <taxon>Enterobacteriaceae</taxon>
        <taxon>Escherichia</taxon>
    </lineage>
</organism>
<dbReference type="EMBL" id="AE005174">
    <property type="protein sequence ID" value="AAG54956.1"/>
    <property type="molecule type" value="Genomic_DNA"/>
</dbReference>
<dbReference type="EMBL" id="BA000007">
    <property type="protein sequence ID" value="BAB34083.1"/>
    <property type="molecule type" value="Genomic_DNA"/>
</dbReference>
<dbReference type="PIR" id="D90711">
    <property type="entry name" value="D90711"/>
</dbReference>
<dbReference type="PIR" id="H85561">
    <property type="entry name" value="H85561"/>
</dbReference>
<dbReference type="RefSeq" id="NP_308687.1">
    <property type="nucleotide sequence ID" value="NC_002695.1"/>
</dbReference>
<dbReference type="RefSeq" id="WP_000955063.1">
    <property type="nucleotide sequence ID" value="NZ_VOAI01000012.1"/>
</dbReference>
<dbReference type="SMR" id="P0ABP4"/>
<dbReference type="STRING" id="155864.Z0766"/>
<dbReference type="GeneID" id="75205017"/>
<dbReference type="GeneID" id="917020"/>
<dbReference type="KEGG" id="ece:Z0766"/>
<dbReference type="KEGG" id="ecs:ECs_0660"/>
<dbReference type="PATRIC" id="fig|386585.9.peg.771"/>
<dbReference type="eggNOG" id="COG3069">
    <property type="taxonomic scope" value="Bacteria"/>
</dbReference>
<dbReference type="HOGENOM" id="CLU_030262_3_2_6"/>
<dbReference type="OMA" id="KYMLQYR"/>
<dbReference type="Proteomes" id="UP000000558">
    <property type="component" value="Chromosome"/>
</dbReference>
<dbReference type="Proteomes" id="UP000002519">
    <property type="component" value="Chromosome"/>
</dbReference>
<dbReference type="GO" id="GO:0005886">
    <property type="term" value="C:plasma membrane"/>
    <property type="evidence" value="ECO:0007669"/>
    <property type="project" value="UniProtKB-SubCell"/>
</dbReference>
<dbReference type="GO" id="GO:0015297">
    <property type="term" value="F:antiporter activity"/>
    <property type="evidence" value="ECO:0007669"/>
    <property type="project" value="UniProtKB-KW"/>
</dbReference>
<dbReference type="GO" id="GO:0015556">
    <property type="term" value="F:C4-dicarboxylate transmembrane transporter activity"/>
    <property type="evidence" value="ECO:0007669"/>
    <property type="project" value="InterPro"/>
</dbReference>
<dbReference type="InterPro" id="IPR004669">
    <property type="entry name" value="C4_dicarb_anaerob_car"/>
</dbReference>
<dbReference type="InterPro" id="IPR018385">
    <property type="entry name" value="C4_dicarb_anaerob_car-like"/>
</dbReference>
<dbReference type="NCBIfam" id="TIGR00771">
    <property type="entry name" value="DcuC"/>
    <property type="match status" value="1"/>
</dbReference>
<dbReference type="NCBIfam" id="NF037994">
    <property type="entry name" value="DcuC_1"/>
    <property type="match status" value="1"/>
</dbReference>
<dbReference type="NCBIfam" id="NF007937">
    <property type="entry name" value="PRK10654.1"/>
    <property type="match status" value="1"/>
</dbReference>
<dbReference type="PANTHER" id="PTHR42002">
    <property type="entry name" value="ANAEROBIC C4-DICARBOXYLATE TRANSPORTER DCUC-RELATED"/>
    <property type="match status" value="1"/>
</dbReference>
<dbReference type="PANTHER" id="PTHR42002:SF2">
    <property type="entry name" value="ANAEROBIC C4-DICARBOXYLATE TRANSPORTER DCUC-RELATED"/>
    <property type="match status" value="1"/>
</dbReference>
<dbReference type="Pfam" id="PF03606">
    <property type="entry name" value="DcuC"/>
    <property type="match status" value="1"/>
</dbReference>
<gene>
    <name type="primary">dcuC</name>
    <name type="ordered locus">Z0766</name>
    <name type="ordered locus">ECs0660</name>
</gene>
<reference key="1">
    <citation type="journal article" date="2001" name="Nature">
        <title>Genome sequence of enterohaemorrhagic Escherichia coli O157:H7.</title>
        <authorList>
            <person name="Perna N.T."/>
            <person name="Plunkett G. III"/>
            <person name="Burland V."/>
            <person name="Mau B."/>
            <person name="Glasner J.D."/>
            <person name="Rose D.J."/>
            <person name="Mayhew G.F."/>
            <person name="Evans P.S."/>
            <person name="Gregor J."/>
            <person name="Kirkpatrick H.A."/>
            <person name="Posfai G."/>
            <person name="Hackett J."/>
            <person name="Klink S."/>
            <person name="Boutin A."/>
            <person name="Shao Y."/>
            <person name="Miller L."/>
            <person name="Grotbeck E.J."/>
            <person name="Davis N.W."/>
            <person name="Lim A."/>
            <person name="Dimalanta E.T."/>
            <person name="Potamousis K."/>
            <person name="Apodaca J."/>
            <person name="Anantharaman T.S."/>
            <person name="Lin J."/>
            <person name="Yen G."/>
            <person name="Schwartz D.C."/>
            <person name="Welch R.A."/>
            <person name="Blattner F.R."/>
        </authorList>
    </citation>
    <scope>NUCLEOTIDE SEQUENCE [LARGE SCALE GENOMIC DNA]</scope>
    <source>
        <strain>O157:H7 / EDL933 / ATCC 700927 / EHEC</strain>
    </source>
</reference>
<reference key="2">
    <citation type="journal article" date="2001" name="DNA Res.">
        <title>Complete genome sequence of enterohemorrhagic Escherichia coli O157:H7 and genomic comparison with a laboratory strain K-12.</title>
        <authorList>
            <person name="Hayashi T."/>
            <person name="Makino K."/>
            <person name="Ohnishi M."/>
            <person name="Kurokawa K."/>
            <person name="Ishii K."/>
            <person name="Yokoyama K."/>
            <person name="Han C.-G."/>
            <person name="Ohtsubo E."/>
            <person name="Nakayama K."/>
            <person name="Murata T."/>
            <person name="Tanaka M."/>
            <person name="Tobe T."/>
            <person name="Iida T."/>
            <person name="Takami H."/>
            <person name="Honda T."/>
            <person name="Sasakawa C."/>
            <person name="Ogasawara N."/>
            <person name="Yasunaga T."/>
            <person name="Kuhara S."/>
            <person name="Shiba T."/>
            <person name="Hattori M."/>
            <person name="Shinagawa H."/>
        </authorList>
    </citation>
    <scope>NUCLEOTIDE SEQUENCE [LARGE SCALE GENOMIC DNA]</scope>
    <source>
        <strain>O157:H7 / Sakai / RIMD 0509952 / EHEC</strain>
    </source>
</reference>
<protein>
    <recommendedName>
        <fullName evidence="1">Anaerobic C4-dicarboxylate transporter DcuC</fullName>
    </recommendedName>
</protein>
<sequence>MLTFIELLIGVVVIVGVARYIIKGYSATGVLFVGGLLLLIISAIMGHKVLPSSQASTGYSATDIVEYVKILLMSRGGDLGMMIMMLCGFAAYMTHIGANDMVVKLASKPLQYINSPYLLMIAAYFVACLMSLAVSSATGLGVLLMATLFPVMVNVGISRGAAAAICASPAAIILAPTSGDVVLAAQASEMSLIDFAFKTTLPISIAAIIGMAIAHFFWQRYLDKKEHISHEMLDVSEITTTAPAFYAILPFTPIIGVLIFDGKWGPQLHIITILVICMLIASILEFLRSFNTQKVFSGLEVAYRGMADAFANVVMLLVAAGVFAQGLSTIGFIQSLISIATSFGSASIILMLVLVILTMLAAVTTGSGNAPFYAFVEMIPKLAHSSGINPAYLTIPMLQASNLGRTLSPVSGVVVAVAGMAKISPFEVVKRTSVPVLVGLVIVIVATELMVPGTAAAVTGK</sequence>
<feature type="chain" id="PRO_0000201628" description="Anaerobic C4-dicarboxylate transporter DcuC">
    <location>
        <begin position="1"/>
        <end position="461"/>
    </location>
</feature>
<feature type="transmembrane region" description="Helical" evidence="2">
    <location>
        <begin position="2"/>
        <end position="22"/>
    </location>
</feature>
<feature type="transmembrane region" description="Helical" evidence="2">
    <location>
        <begin position="26"/>
        <end position="46"/>
    </location>
</feature>
<feature type="transmembrane region" description="Helical" evidence="2">
    <location>
        <begin position="79"/>
        <end position="99"/>
    </location>
</feature>
<feature type="transmembrane region" description="Helical" evidence="2">
    <location>
        <begin position="116"/>
        <end position="136"/>
    </location>
</feature>
<feature type="transmembrane region" description="Helical" evidence="2">
    <location>
        <begin position="137"/>
        <end position="157"/>
    </location>
</feature>
<feature type="transmembrane region" description="Helical" evidence="2">
    <location>
        <begin position="164"/>
        <end position="184"/>
    </location>
</feature>
<feature type="transmembrane region" description="Helical" evidence="2">
    <location>
        <begin position="199"/>
        <end position="219"/>
    </location>
</feature>
<feature type="transmembrane region" description="Helical" evidence="2">
    <location>
        <begin position="240"/>
        <end position="260"/>
    </location>
</feature>
<feature type="transmembrane region" description="Helical" evidence="2">
    <location>
        <begin position="267"/>
        <end position="287"/>
    </location>
</feature>
<feature type="transmembrane region" description="Helical" evidence="2">
    <location>
        <begin position="313"/>
        <end position="333"/>
    </location>
</feature>
<feature type="transmembrane region" description="Helical" evidence="2">
    <location>
        <begin position="343"/>
        <end position="363"/>
    </location>
</feature>
<feature type="transmembrane region" description="Helical" evidence="2">
    <location>
        <begin position="436"/>
        <end position="456"/>
    </location>
</feature>
<comment type="function">
    <text evidence="1">Responsible for the transport of C4-dicarboxylates during anaerobic growth. Catalyzes the uptake of fumarate coupled to the export of succinate.</text>
</comment>
<comment type="catalytic activity">
    <reaction evidence="1">
        <text>fumarate(in) + succinate(out) = fumarate(out) + succinate(in)</text>
        <dbReference type="Rhea" id="RHEA:29323"/>
        <dbReference type="ChEBI" id="CHEBI:29806"/>
        <dbReference type="ChEBI" id="CHEBI:30031"/>
    </reaction>
    <physiologicalReaction direction="right-to-left" evidence="1">
        <dbReference type="Rhea" id="RHEA:29325"/>
    </physiologicalReaction>
</comment>
<comment type="subcellular location">
    <subcellularLocation>
        <location evidence="1">Cell inner membrane</location>
        <topology evidence="2">Multi-pass membrane protein</topology>
    </subcellularLocation>
</comment>
<comment type="similarity">
    <text evidence="3">Belongs to the DcuC/DcuD transporter (TC 2.A.61) family.</text>
</comment>
<evidence type="ECO:0000250" key="1">
    <source>
        <dbReference type="UniProtKB" id="P0ABP3"/>
    </source>
</evidence>
<evidence type="ECO:0000255" key="2"/>
<evidence type="ECO:0000305" key="3"/>
<name>DCUC_ECO57</name>
<keyword id="KW-0050">Antiport</keyword>
<keyword id="KW-0997">Cell inner membrane</keyword>
<keyword id="KW-1003">Cell membrane</keyword>
<keyword id="KW-0472">Membrane</keyword>
<keyword id="KW-1185">Reference proteome</keyword>
<keyword id="KW-0812">Transmembrane</keyword>
<keyword id="KW-1133">Transmembrane helix</keyword>
<keyword id="KW-0813">Transport</keyword>
<proteinExistence type="inferred from homology"/>
<accession>P0ABP4</accession>
<accession>Q47134</accession>
<accession>Q9ZBC9</accession>
<accession>Q9ZBD0</accession>